<name>APT_CERS1</name>
<feature type="chain" id="PRO_0000321394" description="Adenine phosphoribosyltransferase">
    <location>
        <begin position="1"/>
        <end position="178"/>
    </location>
</feature>
<gene>
    <name evidence="1" type="primary">apt</name>
    <name type="ordered locus">Rsph17029_0485</name>
</gene>
<keyword id="KW-0963">Cytoplasm</keyword>
<keyword id="KW-0328">Glycosyltransferase</keyword>
<keyword id="KW-0660">Purine salvage</keyword>
<keyword id="KW-0808">Transferase</keyword>
<reference key="1">
    <citation type="submission" date="2007-02" db="EMBL/GenBank/DDBJ databases">
        <title>Complete sequence of chromosome 1 of Rhodobacter sphaeroides ATCC 17029.</title>
        <authorList>
            <person name="Copeland A."/>
            <person name="Lucas S."/>
            <person name="Lapidus A."/>
            <person name="Barry K."/>
            <person name="Detter J.C."/>
            <person name="Glavina del Rio T."/>
            <person name="Hammon N."/>
            <person name="Israni S."/>
            <person name="Dalin E."/>
            <person name="Tice H."/>
            <person name="Pitluck S."/>
            <person name="Kiss H."/>
            <person name="Brettin T."/>
            <person name="Bruce D."/>
            <person name="Han C."/>
            <person name="Tapia R."/>
            <person name="Gilna P."/>
            <person name="Schmutz J."/>
            <person name="Larimer F."/>
            <person name="Land M."/>
            <person name="Hauser L."/>
            <person name="Kyrpides N."/>
            <person name="Mikhailova N."/>
            <person name="Richardson P."/>
            <person name="Mackenzie C."/>
            <person name="Choudhary M."/>
            <person name="Donohue T.J."/>
            <person name="Kaplan S."/>
        </authorList>
    </citation>
    <scope>NUCLEOTIDE SEQUENCE [LARGE SCALE GENOMIC DNA]</scope>
    <source>
        <strain>ATCC 17029 / ATH 2.4.9</strain>
    </source>
</reference>
<protein>
    <recommendedName>
        <fullName evidence="1">Adenine phosphoribosyltransferase</fullName>
        <shortName evidence="1">APRT</shortName>
        <ecNumber evidence="1">2.4.2.7</ecNumber>
    </recommendedName>
</protein>
<organism>
    <name type="scientific">Cereibacter sphaeroides (strain ATCC 17029 / ATH 2.4.9)</name>
    <name type="common">Rhodobacter sphaeroides</name>
    <dbReference type="NCBI Taxonomy" id="349101"/>
    <lineage>
        <taxon>Bacteria</taxon>
        <taxon>Pseudomonadati</taxon>
        <taxon>Pseudomonadota</taxon>
        <taxon>Alphaproteobacteria</taxon>
        <taxon>Rhodobacterales</taxon>
        <taxon>Paracoccaceae</taxon>
        <taxon>Cereibacter</taxon>
    </lineage>
</organism>
<proteinExistence type="inferred from homology"/>
<accession>A3PGY5</accession>
<dbReference type="EC" id="2.4.2.7" evidence="1"/>
<dbReference type="EMBL" id="CP000577">
    <property type="protein sequence ID" value="ABN75601.1"/>
    <property type="molecule type" value="Genomic_DNA"/>
</dbReference>
<dbReference type="RefSeq" id="WP_011840387.1">
    <property type="nucleotide sequence ID" value="NC_009049.1"/>
</dbReference>
<dbReference type="SMR" id="A3PGY5"/>
<dbReference type="KEGG" id="rsh:Rsph17029_0485"/>
<dbReference type="HOGENOM" id="CLU_063339_3_0_5"/>
<dbReference type="UniPathway" id="UPA00588">
    <property type="reaction ID" value="UER00646"/>
</dbReference>
<dbReference type="GO" id="GO:0005737">
    <property type="term" value="C:cytoplasm"/>
    <property type="evidence" value="ECO:0007669"/>
    <property type="project" value="UniProtKB-SubCell"/>
</dbReference>
<dbReference type="GO" id="GO:0002055">
    <property type="term" value="F:adenine binding"/>
    <property type="evidence" value="ECO:0007669"/>
    <property type="project" value="TreeGrafter"/>
</dbReference>
<dbReference type="GO" id="GO:0003999">
    <property type="term" value="F:adenine phosphoribosyltransferase activity"/>
    <property type="evidence" value="ECO:0007669"/>
    <property type="project" value="UniProtKB-UniRule"/>
</dbReference>
<dbReference type="GO" id="GO:0016208">
    <property type="term" value="F:AMP binding"/>
    <property type="evidence" value="ECO:0007669"/>
    <property type="project" value="TreeGrafter"/>
</dbReference>
<dbReference type="GO" id="GO:0006168">
    <property type="term" value="P:adenine salvage"/>
    <property type="evidence" value="ECO:0007669"/>
    <property type="project" value="InterPro"/>
</dbReference>
<dbReference type="GO" id="GO:0044209">
    <property type="term" value="P:AMP salvage"/>
    <property type="evidence" value="ECO:0007669"/>
    <property type="project" value="UniProtKB-UniRule"/>
</dbReference>
<dbReference type="GO" id="GO:0006166">
    <property type="term" value="P:purine ribonucleoside salvage"/>
    <property type="evidence" value="ECO:0007669"/>
    <property type="project" value="UniProtKB-KW"/>
</dbReference>
<dbReference type="CDD" id="cd06223">
    <property type="entry name" value="PRTases_typeI"/>
    <property type="match status" value="1"/>
</dbReference>
<dbReference type="FunFam" id="3.40.50.2020:FF:000021">
    <property type="entry name" value="Adenine phosphoribosyltransferase"/>
    <property type="match status" value="1"/>
</dbReference>
<dbReference type="Gene3D" id="3.40.50.2020">
    <property type="match status" value="1"/>
</dbReference>
<dbReference type="HAMAP" id="MF_00004">
    <property type="entry name" value="Aden_phosphoribosyltr"/>
    <property type="match status" value="1"/>
</dbReference>
<dbReference type="InterPro" id="IPR005764">
    <property type="entry name" value="Ade_phspho_trans"/>
</dbReference>
<dbReference type="InterPro" id="IPR000836">
    <property type="entry name" value="PRibTrfase_dom"/>
</dbReference>
<dbReference type="InterPro" id="IPR029057">
    <property type="entry name" value="PRTase-like"/>
</dbReference>
<dbReference type="InterPro" id="IPR050054">
    <property type="entry name" value="UPRTase/APRTase"/>
</dbReference>
<dbReference type="NCBIfam" id="TIGR01090">
    <property type="entry name" value="apt"/>
    <property type="match status" value="1"/>
</dbReference>
<dbReference type="NCBIfam" id="NF002634">
    <property type="entry name" value="PRK02304.1-3"/>
    <property type="match status" value="1"/>
</dbReference>
<dbReference type="NCBIfam" id="NF002636">
    <property type="entry name" value="PRK02304.1-5"/>
    <property type="match status" value="1"/>
</dbReference>
<dbReference type="PANTHER" id="PTHR32315">
    <property type="entry name" value="ADENINE PHOSPHORIBOSYLTRANSFERASE"/>
    <property type="match status" value="1"/>
</dbReference>
<dbReference type="PANTHER" id="PTHR32315:SF3">
    <property type="entry name" value="ADENINE PHOSPHORIBOSYLTRANSFERASE"/>
    <property type="match status" value="1"/>
</dbReference>
<dbReference type="Pfam" id="PF00156">
    <property type="entry name" value="Pribosyltran"/>
    <property type="match status" value="1"/>
</dbReference>
<dbReference type="SUPFAM" id="SSF53271">
    <property type="entry name" value="PRTase-like"/>
    <property type="match status" value="1"/>
</dbReference>
<dbReference type="PROSITE" id="PS00103">
    <property type="entry name" value="PUR_PYR_PR_TRANSFER"/>
    <property type="match status" value="1"/>
</dbReference>
<evidence type="ECO:0000255" key="1">
    <source>
        <dbReference type="HAMAP-Rule" id="MF_00004"/>
    </source>
</evidence>
<sequence length="178" mass="19279">MTHKSVRDYIRTIVDFPHEGILFRDVTTLFADPRGFRIAIDQLLAPYAGMRFDKVAGLEARGFILGGAVAHQLSTGFVPIRKKGKLPGRTISVSYQLEYGEAVVEVHDDAIQAGEKVLLVDDLLATGGTAEAGIKLIEQLGDQVVGCAFVVDLPDLGGRRRLEAMGMEVHALCAFEGL</sequence>
<comment type="function">
    <text evidence="1">Catalyzes a salvage reaction resulting in the formation of AMP, that is energically less costly than de novo synthesis.</text>
</comment>
<comment type="catalytic activity">
    <reaction evidence="1">
        <text>AMP + diphosphate = 5-phospho-alpha-D-ribose 1-diphosphate + adenine</text>
        <dbReference type="Rhea" id="RHEA:16609"/>
        <dbReference type="ChEBI" id="CHEBI:16708"/>
        <dbReference type="ChEBI" id="CHEBI:33019"/>
        <dbReference type="ChEBI" id="CHEBI:58017"/>
        <dbReference type="ChEBI" id="CHEBI:456215"/>
        <dbReference type="EC" id="2.4.2.7"/>
    </reaction>
</comment>
<comment type="pathway">
    <text evidence="1">Purine metabolism; AMP biosynthesis via salvage pathway; AMP from adenine: step 1/1.</text>
</comment>
<comment type="subunit">
    <text evidence="1">Homodimer.</text>
</comment>
<comment type="subcellular location">
    <subcellularLocation>
        <location evidence="1">Cytoplasm</location>
    </subcellularLocation>
</comment>
<comment type="similarity">
    <text evidence="1">Belongs to the purine/pyrimidine phosphoribosyltransferase family.</text>
</comment>